<name>Y550_GEOTN</name>
<accession>A4IKS8</accession>
<dbReference type="EMBL" id="CP000557">
    <property type="protein sequence ID" value="ABO65932.1"/>
    <property type="molecule type" value="Genomic_DNA"/>
</dbReference>
<dbReference type="RefSeq" id="WP_011886857.1">
    <property type="nucleotide sequence ID" value="NC_009328.1"/>
</dbReference>
<dbReference type="KEGG" id="gtn:GTNG_0550"/>
<dbReference type="eggNOG" id="COG4399">
    <property type="taxonomic scope" value="Bacteria"/>
</dbReference>
<dbReference type="HOGENOM" id="CLU_042384_0_0_9"/>
<dbReference type="Proteomes" id="UP000001578">
    <property type="component" value="Chromosome"/>
</dbReference>
<dbReference type="GO" id="GO:0005886">
    <property type="term" value="C:plasma membrane"/>
    <property type="evidence" value="ECO:0007669"/>
    <property type="project" value="UniProtKB-SubCell"/>
</dbReference>
<dbReference type="InterPro" id="IPR007383">
    <property type="entry name" value="DUF445"/>
</dbReference>
<dbReference type="InterPro" id="IPR016991">
    <property type="entry name" value="UCP032178"/>
</dbReference>
<dbReference type="PANTHER" id="PTHR35791">
    <property type="entry name" value="UPF0754 MEMBRANE PROTEIN YHEB"/>
    <property type="match status" value="1"/>
</dbReference>
<dbReference type="PANTHER" id="PTHR35791:SF1">
    <property type="entry name" value="UPF0754 MEMBRANE PROTEIN YHEB"/>
    <property type="match status" value="1"/>
</dbReference>
<dbReference type="Pfam" id="PF04286">
    <property type="entry name" value="DUF445"/>
    <property type="match status" value="1"/>
</dbReference>
<dbReference type="PIRSF" id="PIRSF032178">
    <property type="entry name" value="UCP032178"/>
    <property type="match status" value="1"/>
</dbReference>
<comment type="subcellular location">
    <subcellularLocation>
        <location evidence="1">Cell membrane</location>
        <topology evidence="1">Multi-pass membrane protein</topology>
    </subcellularLocation>
</comment>
<comment type="similarity">
    <text evidence="3">Belongs to the UPF0754 family.</text>
</comment>
<proteinExistence type="inferred from homology"/>
<evidence type="ECO:0000250" key="1"/>
<evidence type="ECO:0000255" key="2"/>
<evidence type="ECO:0000305" key="3"/>
<feature type="chain" id="PRO_0000388293" description="UPF0754 membrane protein GTNG_0550">
    <location>
        <begin position="1"/>
        <end position="377"/>
    </location>
</feature>
<feature type="transmembrane region" description="Helical" evidence="2">
    <location>
        <begin position="7"/>
        <end position="27"/>
    </location>
</feature>
<feature type="transmembrane region" description="Helical" evidence="2">
    <location>
        <begin position="357"/>
        <end position="377"/>
    </location>
</feature>
<gene>
    <name type="ordered locus">GTNG_0550</name>
</gene>
<protein>
    <recommendedName>
        <fullName>UPF0754 membrane protein GTNG_0550</fullName>
    </recommendedName>
</protein>
<reference key="1">
    <citation type="journal article" date="2007" name="Proc. Natl. Acad. Sci. U.S.A.">
        <title>Genome and proteome of long-chain alkane degrading Geobacillus thermodenitrificans NG80-2 isolated from a deep-subsurface oil reservoir.</title>
        <authorList>
            <person name="Feng L."/>
            <person name="Wang W."/>
            <person name="Cheng J."/>
            <person name="Ren Y."/>
            <person name="Zhao G."/>
            <person name="Gao C."/>
            <person name="Tang Y."/>
            <person name="Liu X."/>
            <person name="Han W."/>
            <person name="Peng X."/>
            <person name="Liu R."/>
            <person name="Wang L."/>
        </authorList>
    </citation>
    <scope>NUCLEOTIDE SEQUENCE [LARGE SCALE GENOMIC DNA]</scope>
    <source>
        <strain>NG80-2</strain>
    </source>
</reference>
<keyword id="KW-1003">Cell membrane</keyword>
<keyword id="KW-0472">Membrane</keyword>
<keyword id="KW-0812">Transmembrane</keyword>
<keyword id="KW-1133">Transmembrane helix</keyword>
<sequence>MNTFVYLLFMMAVGALIGGMTNFIAIVMLFRPYEPIYIFGKRLPLTPGLIPKRRRELAEQLGKTVVEHLVTPEGLRRKLTDPVFVAEVADWGREWLKRWLSRRETPAQLLERLGVHAPDEWLSELAAKQAGRAYEQWSETWRLRPIRDLLSPELKETMESRIESLADYLADRVIDYFSSEEGKRQIAGMIDRFFQERGMVGGMMQMLLGNVNFVDKVQSELGKFLRHAGTRAMLARLLWTEWNKWISYPLAAVEEMIGRQRIKETVSAAARGLVRNNDWLDRPLAELIAPYERELFDRFVPQAANAAIHALSDKIEGIVGKLGLADIVRNQVESFSLRRLEVIILSIARRELKMITYLGALLGAMIGAVQGIIGLWL</sequence>
<organism>
    <name type="scientific">Geobacillus thermodenitrificans (strain NG80-2)</name>
    <dbReference type="NCBI Taxonomy" id="420246"/>
    <lineage>
        <taxon>Bacteria</taxon>
        <taxon>Bacillati</taxon>
        <taxon>Bacillota</taxon>
        <taxon>Bacilli</taxon>
        <taxon>Bacillales</taxon>
        <taxon>Anoxybacillaceae</taxon>
        <taxon>Geobacillus</taxon>
    </lineage>
</organism>